<sequence length="65" mass="7427">MPAGVSWPRYLRMFAASVLSMFAGAQVVHHYYRPDLSIPEIPPKPGELRTELLGLKERQMDSQKQ</sequence>
<protein>
    <recommendedName>
        <fullName>Ubiquinol-cytochrome-c reductase complex assembly factor 6</fullName>
    </recommendedName>
    <alternativeName>
        <fullName evidence="5">Protein brawnin</fullName>
    </alternativeName>
</protein>
<comment type="function">
    <text evidence="1 2 4">Required for the assembly and stability of the mitochondrial ubiquinol-cytochrome c reductase complex (complex III (CIII) or cytochrome b-c1 complex), a multisubunit transmembrane complex that is part of the mitochondrial electron transport chain (ETC) which drives oxidative phosphorylation (PubMed:32161263). Mediates early complex III biogenesis. Participates in regulating the levels of electron transport chain proteins, and therefore energy supply, in response to changes in energy demand (By similarity). Also required for cytochrome c oxidase complex (complex IV) assembly (By similarity).</text>
</comment>
<comment type="subcellular location">
    <subcellularLocation>
        <location evidence="7">Mitochondrion inner membrane</location>
        <topology evidence="1">Single-pass type II membrane protein</topology>
    </subcellularLocation>
</comment>
<comment type="tissue specificity">
    <text evidence="4">Highly expressed in skeletal and cardiac muscle (at protein level).</text>
</comment>
<comment type="disruption phenotype">
    <text evidence="4">A complete loss of mitochondrial respiratory chain complex III resulting in severe growth retardation, lactic acidosis and early death.</text>
</comment>
<comment type="similarity">
    <text evidence="6">Belongs to the UQCC6 family.</text>
</comment>
<evidence type="ECO:0000250" key="1">
    <source>
        <dbReference type="UniProtKB" id="Q69YU5"/>
    </source>
</evidence>
<evidence type="ECO:0000250" key="2">
    <source>
        <dbReference type="UniProtKB" id="Q8BTC1"/>
    </source>
</evidence>
<evidence type="ECO:0000255" key="3"/>
<evidence type="ECO:0000269" key="4">
    <source>
    </source>
</evidence>
<evidence type="ECO:0000303" key="5">
    <source>
    </source>
</evidence>
<evidence type="ECO:0000305" key="6"/>
<evidence type="ECO:0000305" key="7">
    <source>
    </source>
</evidence>
<accession>E7EXZ6</accession>
<dbReference type="EMBL" id="CR391963">
    <property type="status" value="NOT_ANNOTATED_CDS"/>
    <property type="molecule type" value="Genomic_DNA"/>
</dbReference>
<dbReference type="RefSeq" id="NP_001129045.1">
    <property type="nucleotide sequence ID" value="NM_001135573.2"/>
</dbReference>
<dbReference type="SMR" id="E7EXZ6"/>
<dbReference type="FunCoup" id="E7EXZ6">
    <property type="interactions" value="474"/>
</dbReference>
<dbReference type="PaxDb" id="7955-ENSDARP00000129487"/>
<dbReference type="Ensembl" id="ENSDART00000155927">
    <property type="protein sequence ID" value="ENSDARP00000129487"/>
    <property type="gene ID" value="ENSDARG00000045797"/>
</dbReference>
<dbReference type="GeneID" id="100190888"/>
<dbReference type="KEGG" id="dre:100190888"/>
<dbReference type="AGR" id="ZFIN:ZDB-GENE-100427-3"/>
<dbReference type="CTD" id="728568"/>
<dbReference type="ZFIN" id="ZDB-GENE-100427-3">
    <property type="gene designation" value="uqcc6"/>
</dbReference>
<dbReference type="eggNOG" id="ENOG502S9EP">
    <property type="taxonomic scope" value="Eukaryota"/>
</dbReference>
<dbReference type="HOGENOM" id="CLU_202878_0_0_1"/>
<dbReference type="InParanoid" id="E7EXZ6"/>
<dbReference type="OMA" id="AVHRYYR"/>
<dbReference type="OrthoDB" id="6139781at2759"/>
<dbReference type="PhylomeDB" id="E7EXZ6"/>
<dbReference type="PRO" id="PR:E7EXZ6"/>
<dbReference type="Proteomes" id="UP000000437">
    <property type="component" value="Chromosome 25"/>
</dbReference>
<dbReference type="Bgee" id="ENSDARG00000045797">
    <property type="expression patterns" value="Expressed in heart and 23 other cell types or tissues"/>
</dbReference>
<dbReference type="GO" id="GO:0005743">
    <property type="term" value="C:mitochondrial inner membrane"/>
    <property type="evidence" value="ECO:0000250"/>
    <property type="project" value="UniProtKB"/>
</dbReference>
<dbReference type="GO" id="GO:0005739">
    <property type="term" value="C:mitochondrion"/>
    <property type="evidence" value="ECO:0000314"/>
    <property type="project" value="UniProtKB"/>
</dbReference>
<dbReference type="GO" id="GO:0033617">
    <property type="term" value="P:mitochondrial cytochrome c oxidase assembly"/>
    <property type="evidence" value="ECO:0000250"/>
    <property type="project" value="UniProtKB"/>
</dbReference>
<dbReference type="GO" id="GO:0034551">
    <property type="term" value="P:mitochondrial respiratory chain complex III assembly"/>
    <property type="evidence" value="ECO:0000315"/>
    <property type="project" value="UniProtKB"/>
</dbReference>
<dbReference type="InterPro" id="IPR027858">
    <property type="entry name" value="BRAWNIN"/>
</dbReference>
<dbReference type="PANTHER" id="PTHR28492">
    <property type="entry name" value="HYPOTHETICAL PROTEIN LOC691921"/>
    <property type="match status" value="1"/>
</dbReference>
<dbReference type="PANTHER" id="PTHR28492:SF1">
    <property type="entry name" value="UBIQUINOL-CYTOCHROME-C REDUCTASE COMPLEX ASSEMBLY FACTOR 6"/>
    <property type="match status" value="1"/>
</dbReference>
<dbReference type="Pfam" id="PF14990">
    <property type="entry name" value="DUF4516"/>
    <property type="match status" value="1"/>
</dbReference>
<gene>
    <name type="primary">uqcc6</name>
    <name evidence="5" type="synonym">br</name>
    <name evidence="5" type="synonym">brawnin</name>
    <name type="synonym">bsi:ch211-68a17.7</name>
</gene>
<feature type="chain" id="PRO_0000450548" description="Ubiquinol-cytochrome-c reductase complex assembly factor 6">
    <location>
        <begin position="1"/>
        <end position="65"/>
    </location>
</feature>
<feature type="topological domain" description="Mitochondrial matrix" evidence="1">
    <location>
        <begin position="1"/>
        <end position="9"/>
    </location>
</feature>
<feature type="transmembrane region" description="Helical; Signal-anchor for type II membrane protein" evidence="3">
    <location>
        <begin position="10"/>
        <end position="32"/>
    </location>
</feature>
<feature type="topological domain" description="Mitochondrial intermembrane" evidence="1">
    <location>
        <begin position="33"/>
        <end position="65"/>
    </location>
</feature>
<name>UQCC6_DANRE</name>
<proteinExistence type="evidence at protein level"/>
<organism>
    <name type="scientific">Danio rerio</name>
    <name type="common">Zebrafish</name>
    <name type="synonym">Brachydanio rerio</name>
    <dbReference type="NCBI Taxonomy" id="7955"/>
    <lineage>
        <taxon>Eukaryota</taxon>
        <taxon>Metazoa</taxon>
        <taxon>Chordata</taxon>
        <taxon>Craniata</taxon>
        <taxon>Vertebrata</taxon>
        <taxon>Euteleostomi</taxon>
        <taxon>Actinopterygii</taxon>
        <taxon>Neopterygii</taxon>
        <taxon>Teleostei</taxon>
        <taxon>Ostariophysi</taxon>
        <taxon>Cypriniformes</taxon>
        <taxon>Danionidae</taxon>
        <taxon>Danioninae</taxon>
        <taxon>Danio</taxon>
    </lineage>
</organism>
<reference key="1">
    <citation type="journal article" date="2013" name="Nature">
        <title>The zebrafish reference genome sequence and its relationship to the human genome.</title>
        <authorList>
            <person name="Howe K."/>
            <person name="Clark M.D."/>
            <person name="Torroja C.F."/>
            <person name="Torrance J."/>
            <person name="Berthelot C."/>
            <person name="Muffato M."/>
            <person name="Collins J.E."/>
            <person name="Humphray S."/>
            <person name="McLaren K."/>
            <person name="Matthews L."/>
            <person name="McLaren S."/>
            <person name="Sealy I."/>
            <person name="Caccamo M."/>
            <person name="Churcher C."/>
            <person name="Scott C."/>
            <person name="Barrett J.C."/>
            <person name="Koch R."/>
            <person name="Rauch G.J."/>
            <person name="White S."/>
            <person name="Chow W."/>
            <person name="Kilian B."/>
            <person name="Quintais L.T."/>
            <person name="Guerra-Assuncao J.A."/>
            <person name="Zhou Y."/>
            <person name="Gu Y."/>
            <person name="Yen J."/>
            <person name="Vogel J.H."/>
            <person name="Eyre T."/>
            <person name="Redmond S."/>
            <person name="Banerjee R."/>
            <person name="Chi J."/>
            <person name="Fu B."/>
            <person name="Langley E."/>
            <person name="Maguire S.F."/>
            <person name="Laird G.K."/>
            <person name="Lloyd D."/>
            <person name="Kenyon E."/>
            <person name="Donaldson S."/>
            <person name="Sehra H."/>
            <person name="Almeida-King J."/>
            <person name="Loveland J."/>
            <person name="Trevanion S."/>
            <person name="Jones M."/>
            <person name="Quail M."/>
            <person name="Willey D."/>
            <person name="Hunt A."/>
            <person name="Burton J."/>
            <person name="Sims S."/>
            <person name="McLay K."/>
            <person name="Plumb B."/>
            <person name="Davis J."/>
            <person name="Clee C."/>
            <person name="Oliver K."/>
            <person name="Clark R."/>
            <person name="Riddle C."/>
            <person name="Elliot D."/>
            <person name="Threadgold G."/>
            <person name="Harden G."/>
            <person name="Ware D."/>
            <person name="Begum S."/>
            <person name="Mortimore B."/>
            <person name="Kerry G."/>
            <person name="Heath P."/>
            <person name="Phillimore B."/>
            <person name="Tracey A."/>
            <person name="Corby N."/>
            <person name="Dunn M."/>
            <person name="Johnson C."/>
            <person name="Wood J."/>
            <person name="Clark S."/>
            <person name="Pelan S."/>
            <person name="Griffiths G."/>
            <person name="Smith M."/>
            <person name="Glithero R."/>
            <person name="Howden P."/>
            <person name="Barker N."/>
            <person name="Lloyd C."/>
            <person name="Stevens C."/>
            <person name="Harley J."/>
            <person name="Holt K."/>
            <person name="Panagiotidis G."/>
            <person name="Lovell J."/>
            <person name="Beasley H."/>
            <person name="Henderson C."/>
            <person name="Gordon D."/>
            <person name="Auger K."/>
            <person name="Wright D."/>
            <person name="Collins J."/>
            <person name="Raisen C."/>
            <person name="Dyer L."/>
            <person name="Leung K."/>
            <person name="Robertson L."/>
            <person name="Ambridge K."/>
            <person name="Leongamornlert D."/>
            <person name="McGuire S."/>
            <person name="Gilderthorp R."/>
            <person name="Griffiths C."/>
            <person name="Manthravadi D."/>
            <person name="Nichol S."/>
            <person name="Barker G."/>
            <person name="Whitehead S."/>
            <person name="Kay M."/>
            <person name="Brown J."/>
            <person name="Murnane C."/>
            <person name="Gray E."/>
            <person name="Humphries M."/>
            <person name="Sycamore N."/>
            <person name="Barker D."/>
            <person name="Saunders D."/>
            <person name="Wallis J."/>
            <person name="Babbage A."/>
            <person name="Hammond S."/>
            <person name="Mashreghi-Mohammadi M."/>
            <person name="Barr L."/>
            <person name="Martin S."/>
            <person name="Wray P."/>
            <person name="Ellington A."/>
            <person name="Matthews N."/>
            <person name="Ellwood M."/>
            <person name="Woodmansey R."/>
            <person name="Clark G."/>
            <person name="Cooper J."/>
            <person name="Tromans A."/>
            <person name="Grafham D."/>
            <person name="Skuce C."/>
            <person name="Pandian R."/>
            <person name="Andrews R."/>
            <person name="Harrison E."/>
            <person name="Kimberley A."/>
            <person name="Garnett J."/>
            <person name="Fosker N."/>
            <person name="Hall R."/>
            <person name="Garner P."/>
            <person name="Kelly D."/>
            <person name="Bird C."/>
            <person name="Palmer S."/>
            <person name="Gehring I."/>
            <person name="Berger A."/>
            <person name="Dooley C.M."/>
            <person name="Ersan-Urun Z."/>
            <person name="Eser C."/>
            <person name="Geiger H."/>
            <person name="Geisler M."/>
            <person name="Karotki L."/>
            <person name="Kirn A."/>
            <person name="Konantz J."/>
            <person name="Konantz M."/>
            <person name="Oberlander M."/>
            <person name="Rudolph-Geiger S."/>
            <person name="Teucke M."/>
            <person name="Lanz C."/>
            <person name="Raddatz G."/>
            <person name="Osoegawa K."/>
            <person name="Zhu B."/>
            <person name="Rapp A."/>
            <person name="Widaa S."/>
            <person name="Langford C."/>
            <person name="Yang F."/>
            <person name="Schuster S.C."/>
            <person name="Carter N.P."/>
            <person name="Harrow J."/>
            <person name="Ning Z."/>
            <person name="Herrero J."/>
            <person name="Searle S.M."/>
            <person name="Enright A."/>
            <person name="Geisler R."/>
            <person name="Plasterk R.H."/>
            <person name="Lee C."/>
            <person name="Westerfield M."/>
            <person name="de Jong P.J."/>
            <person name="Zon L.I."/>
            <person name="Postlethwait J.H."/>
            <person name="Nusslein-Volhard C."/>
            <person name="Hubbard T.J."/>
            <person name="Roest Crollius H."/>
            <person name="Rogers J."/>
            <person name="Stemple D.L."/>
        </authorList>
    </citation>
    <scope>NUCLEOTIDE SEQUENCE [LARGE SCALE GENOMIC DNA]</scope>
    <source>
        <strain>Tuebingen</strain>
    </source>
</reference>
<reference key="2">
    <citation type="journal article" date="2020" name="Nat. Commun.">
        <title>Mitochondrial peptide BRAWNIN is essential for vertebrate respiratory complex III assembly.</title>
        <authorList>
            <person name="Zhang S."/>
            <person name="Reljic B."/>
            <person name="Liang C."/>
            <person name="Kerouanton B."/>
            <person name="Francisco J.C."/>
            <person name="Peh J.H."/>
            <person name="Mary C."/>
            <person name="Jagannathan N.S."/>
            <person name="Olexiouk V."/>
            <person name="Tang C."/>
            <person name="Fidelito G."/>
            <person name="Nama S."/>
            <person name="Cheng R.K."/>
            <person name="Wee C.L."/>
            <person name="Wang L.C."/>
            <person name="Duek Roggli P."/>
            <person name="Sampath P."/>
            <person name="Lane L."/>
            <person name="Petretto E."/>
            <person name="Sobota R.M."/>
            <person name="Jesuthasan S."/>
            <person name="Tucker-Kellogg L."/>
            <person name="Reversade B."/>
            <person name="Menschaert G."/>
            <person name="Sun L."/>
            <person name="Stroud D.A."/>
            <person name="Ho L."/>
        </authorList>
    </citation>
    <scope>FUNCTION</scope>
    <scope>SUBCELLULAR LOCATION</scope>
    <scope>DISRUPTION PHENOTYPE</scope>
    <scope>TISSUE SPECIFICITY</scope>
</reference>
<keyword id="KW-0472">Membrane</keyword>
<keyword id="KW-0496">Mitochondrion</keyword>
<keyword id="KW-0999">Mitochondrion inner membrane</keyword>
<keyword id="KW-1185">Reference proteome</keyword>
<keyword id="KW-0735">Signal-anchor</keyword>
<keyword id="KW-0812">Transmembrane</keyword>
<keyword id="KW-1133">Transmembrane helix</keyword>